<reference key="1">
    <citation type="journal article" date="2004" name="Proc. Natl. Acad. Sci. U.S.A.">
        <title>The genome sequence of the probiotic intestinal bacterium Lactobacillus johnsonii NCC 533.</title>
        <authorList>
            <person name="Pridmore R.D."/>
            <person name="Berger B."/>
            <person name="Desiere F."/>
            <person name="Vilanova D."/>
            <person name="Barretto C."/>
            <person name="Pittet A.-C."/>
            <person name="Zwahlen M.-C."/>
            <person name="Rouvet M."/>
            <person name="Altermann E."/>
            <person name="Barrangou R."/>
            <person name="Mollet B."/>
            <person name="Mercenier A."/>
            <person name="Klaenhammer T."/>
            <person name="Arigoni F."/>
            <person name="Schell M.A."/>
        </authorList>
    </citation>
    <scope>NUCLEOTIDE SEQUENCE [LARGE SCALE GENOMIC DNA]</scope>
    <source>
        <strain>CNCM I-1225 / La1 / NCC 533</strain>
    </source>
</reference>
<keyword id="KW-1003">Cell membrane</keyword>
<keyword id="KW-0472">Membrane</keyword>
<keyword id="KW-0812">Transmembrane</keyword>
<keyword id="KW-1133">Transmembrane helix</keyword>
<comment type="subcellular location">
    <subcellularLocation>
        <location evidence="2">Cell membrane</location>
        <topology evidence="2">Multi-pass membrane protein</topology>
    </subcellularLocation>
</comment>
<comment type="similarity">
    <text evidence="2">Belongs to the UPF0324 family.</text>
</comment>
<sequence length="343" mass="36238">MISIVKSKSFGLAAVMTLICSVAGIFLAKLPYVNLIGALVIALLLGISLQVLPVGVREEAAPGIGFISNKFLRLGIILLGFRLNLTKLADAGIKTILVAMLGVSGTIVLTYWLSKKFGAEDELAVLSACGCGICGAAAVMGVSPQIESRDEERKRENEVLAVAVVCVMGTVFTLLEIVIKPMLGLTDSQFGIVAGGSLHEIAHAIAAGSAFGEASLDSALIMKLSRVLLLAPVALIIGYWYQRRLVKESAQDHTQAPKKLPIPWFLGGFILTSILGTFLPFPPVVLDGLVQAAYVFLGMAMAALGISVNFSVIFKRGGTVFGAAAISSTCLMIFMIIMSKLFF</sequence>
<feature type="chain" id="PRO_0000157422" description="UPF0324 membrane protein LJ_1117">
    <location>
        <begin position="1"/>
        <end position="343"/>
    </location>
</feature>
<feature type="transmembrane region" description="Helical" evidence="1">
    <location>
        <begin position="10"/>
        <end position="27"/>
    </location>
</feature>
<feature type="transmembrane region" description="Helical" evidence="1">
    <location>
        <begin position="32"/>
        <end position="54"/>
    </location>
</feature>
<feature type="transmembrane region" description="Helical" evidence="1">
    <location>
        <begin position="64"/>
        <end position="86"/>
    </location>
</feature>
<feature type="transmembrane region" description="Helical" evidence="1">
    <location>
        <begin position="91"/>
        <end position="113"/>
    </location>
</feature>
<feature type="transmembrane region" description="Helical" evidence="1">
    <location>
        <begin position="123"/>
        <end position="145"/>
    </location>
</feature>
<feature type="transmembrane region" description="Helical" evidence="1">
    <location>
        <begin position="157"/>
        <end position="179"/>
    </location>
</feature>
<feature type="transmembrane region" description="Helical" evidence="1">
    <location>
        <begin position="219"/>
        <end position="241"/>
    </location>
</feature>
<feature type="transmembrane region" description="Helical" evidence="1">
    <location>
        <begin position="262"/>
        <end position="284"/>
    </location>
</feature>
<feature type="transmembrane region" description="Helical" evidence="1">
    <location>
        <begin position="288"/>
        <end position="310"/>
    </location>
</feature>
<feature type="transmembrane region" description="Helical" evidence="1">
    <location>
        <begin position="317"/>
        <end position="339"/>
    </location>
</feature>
<organism>
    <name type="scientific">Lactobacillus johnsonii (strain CNCM I-12250 / La1 / NCC 533)</name>
    <dbReference type="NCBI Taxonomy" id="257314"/>
    <lineage>
        <taxon>Bacteria</taxon>
        <taxon>Bacillati</taxon>
        <taxon>Bacillota</taxon>
        <taxon>Bacilli</taxon>
        <taxon>Lactobacillales</taxon>
        <taxon>Lactobacillaceae</taxon>
        <taxon>Lactobacillus</taxon>
    </lineage>
</organism>
<proteinExistence type="inferred from homology"/>
<protein>
    <recommendedName>
        <fullName>UPF0324 membrane protein LJ_1117</fullName>
    </recommendedName>
</protein>
<accession>Q74JJ0</accession>
<dbReference type="EMBL" id="AE017198">
    <property type="protein sequence ID" value="AAS08939.1"/>
    <property type="molecule type" value="Genomic_DNA"/>
</dbReference>
<dbReference type="RefSeq" id="WP_011161956.1">
    <property type="nucleotide sequence ID" value="NC_005362.1"/>
</dbReference>
<dbReference type="KEGG" id="ljo:LJ_1117"/>
<dbReference type="PATRIC" id="fig|257314.6.peg.979"/>
<dbReference type="eggNOG" id="COG2855">
    <property type="taxonomic scope" value="Bacteria"/>
</dbReference>
<dbReference type="HOGENOM" id="CLU_033541_0_1_9"/>
<dbReference type="Proteomes" id="UP000000581">
    <property type="component" value="Chromosome"/>
</dbReference>
<dbReference type="GO" id="GO:0005886">
    <property type="term" value="C:plasma membrane"/>
    <property type="evidence" value="ECO:0007669"/>
    <property type="project" value="UniProtKB-SubCell"/>
</dbReference>
<dbReference type="InterPro" id="IPR018383">
    <property type="entry name" value="UPF0324_pro"/>
</dbReference>
<dbReference type="PANTHER" id="PTHR30106">
    <property type="entry name" value="INNER MEMBRANE PROTEIN YEIH-RELATED"/>
    <property type="match status" value="1"/>
</dbReference>
<dbReference type="PANTHER" id="PTHR30106:SF2">
    <property type="entry name" value="UPF0324 INNER MEMBRANE PROTEIN YEIH"/>
    <property type="match status" value="1"/>
</dbReference>
<dbReference type="Pfam" id="PF03601">
    <property type="entry name" value="Cons_hypoth698"/>
    <property type="match status" value="1"/>
</dbReference>
<evidence type="ECO:0000255" key="1"/>
<evidence type="ECO:0000305" key="2"/>
<name>Y1117_LACJO</name>
<gene>
    <name type="ordered locus">LJ_1117</name>
</gene>